<proteinExistence type="inferred from homology"/>
<dbReference type="EC" id="2.1.2.11" evidence="1"/>
<dbReference type="EMBL" id="AH010242">
    <property type="protein sequence ID" value="AAG61077.1"/>
    <property type="status" value="ALT_INIT"/>
    <property type="molecule type" value="Genomic_DNA"/>
</dbReference>
<dbReference type="EMBL" id="BA000040">
    <property type="protein sequence ID" value="BAC47366.1"/>
    <property type="status" value="ALT_INIT"/>
    <property type="molecule type" value="Genomic_DNA"/>
</dbReference>
<dbReference type="RefSeq" id="NP_768741.1">
    <property type="nucleotide sequence ID" value="NC_004463.1"/>
</dbReference>
<dbReference type="SMR" id="Q9AMS0"/>
<dbReference type="FunCoup" id="Q9AMS0">
    <property type="interactions" value="547"/>
</dbReference>
<dbReference type="STRING" id="224911.AAV28_07340"/>
<dbReference type="EnsemblBacteria" id="BAC47366">
    <property type="protein sequence ID" value="BAC47366"/>
    <property type="gene ID" value="BAC47366"/>
</dbReference>
<dbReference type="KEGG" id="bja:blr2101"/>
<dbReference type="PATRIC" id="fig|224911.44.peg.1611"/>
<dbReference type="eggNOG" id="COG0413">
    <property type="taxonomic scope" value="Bacteria"/>
</dbReference>
<dbReference type="HOGENOM" id="CLU_036645_1_0_5"/>
<dbReference type="InParanoid" id="Q9AMS0"/>
<dbReference type="OrthoDB" id="9781789at2"/>
<dbReference type="UniPathway" id="UPA00028">
    <property type="reaction ID" value="UER00003"/>
</dbReference>
<dbReference type="Proteomes" id="UP000002526">
    <property type="component" value="Chromosome"/>
</dbReference>
<dbReference type="GO" id="GO:0005737">
    <property type="term" value="C:cytoplasm"/>
    <property type="evidence" value="ECO:0007669"/>
    <property type="project" value="UniProtKB-SubCell"/>
</dbReference>
<dbReference type="GO" id="GO:0003864">
    <property type="term" value="F:3-methyl-2-oxobutanoate hydroxymethyltransferase activity"/>
    <property type="evidence" value="ECO:0000318"/>
    <property type="project" value="GO_Central"/>
</dbReference>
<dbReference type="GO" id="GO:0000287">
    <property type="term" value="F:magnesium ion binding"/>
    <property type="evidence" value="ECO:0000318"/>
    <property type="project" value="GO_Central"/>
</dbReference>
<dbReference type="GO" id="GO:0015940">
    <property type="term" value="P:pantothenate biosynthetic process"/>
    <property type="evidence" value="ECO:0000318"/>
    <property type="project" value="GO_Central"/>
</dbReference>
<dbReference type="CDD" id="cd06557">
    <property type="entry name" value="KPHMT-like"/>
    <property type="match status" value="1"/>
</dbReference>
<dbReference type="FunFam" id="3.20.20.60:FF:000053">
    <property type="entry name" value="3-methyl-2-oxobutanoate hydroxymethyltransferase"/>
    <property type="match status" value="1"/>
</dbReference>
<dbReference type="Gene3D" id="3.20.20.60">
    <property type="entry name" value="Phosphoenolpyruvate-binding domains"/>
    <property type="match status" value="1"/>
</dbReference>
<dbReference type="HAMAP" id="MF_00156">
    <property type="entry name" value="PanB"/>
    <property type="match status" value="1"/>
</dbReference>
<dbReference type="InterPro" id="IPR003700">
    <property type="entry name" value="Pantoate_hydroxy_MeTrfase"/>
</dbReference>
<dbReference type="InterPro" id="IPR015813">
    <property type="entry name" value="Pyrv/PenolPyrv_kinase-like_dom"/>
</dbReference>
<dbReference type="InterPro" id="IPR040442">
    <property type="entry name" value="Pyrv_kinase-like_dom_sf"/>
</dbReference>
<dbReference type="NCBIfam" id="TIGR00222">
    <property type="entry name" value="panB"/>
    <property type="match status" value="1"/>
</dbReference>
<dbReference type="NCBIfam" id="NF001452">
    <property type="entry name" value="PRK00311.1"/>
    <property type="match status" value="1"/>
</dbReference>
<dbReference type="PANTHER" id="PTHR20881">
    <property type="entry name" value="3-METHYL-2-OXOBUTANOATE HYDROXYMETHYLTRANSFERASE"/>
    <property type="match status" value="1"/>
</dbReference>
<dbReference type="PANTHER" id="PTHR20881:SF0">
    <property type="entry name" value="3-METHYL-2-OXOBUTANOATE HYDROXYMETHYLTRANSFERASE"/>
    <property type="match status" value="1"/>
</dbReference>
<dbReference type="Pfam" id="PF02548">
    <property type="entry name" value="Pantoate_transf"/>
    <property type="match status" value="1"/>
</dbReference>
<dbReference type="PIRSF" id="PIRSF000388">
    <property type="entry name" value="Pantoate_hydroxy_MeTrfase"/>
    <property type="match status" value="1"/>
</dbReference>
<dbReference type="SUPFAM" id="SSF51621">
    <property type="entry name" value="Phosphoenolpyruvate/pyruvate domain"/>
    <property type="match status" value="1"/>
</dbReference>
<keyword id="KW-0963">Cytoplasm</keyword>
<keyword id="KW-0460">Magnesium</keyword>
<keyword id="KW-0479">Metal-binding</keyword>
<keyword id="KW-0566">Pantothenate biosynthesis</keyword>
<keyword id="KW-1185">Reference proteome</keyword>
<keyword id="KW-0808">Transferase</keyword>
<name>PANB2_BRADU</name>
<comment type="function">
    <text evidence="1">Catalyzes the reversible reaction in which hydroxymethyl group from 5,10-methylenetetrahydrofolate is transferred onto alpha-ketoisovalerate to form ketopantoate.</text>
</comment>
<comment type="catalytic activity">
    <reaction evidence="1">
        <text>3-methyl-2-oxobutanoate + (6R)-5,10-methylene-5,6,7,8-tetrahydrofolate + H2O = 2-dehydropantoate + (6S)-5,6,7,8-tetrahydrofolate</text>
        <dbReference type="Rhea" id="RHEA:11824"/>
        <dbReference type="ChEBI" id="CHEBI:11561"/>
        <dbReference type="ChEBI" id="CHEBI:11851"/>
        <dbReference type="ChEBI" id="CHEBI:15377"/>
        <dbReference type="ChEBI" id="CHEBI:15636"/>
        <dbReference type="ChEBI" id="CHEBI:57453"/>
        <dbReference type="EC" id="2.1.2.11"/>
    </reaction>
</comment>
<comment type="cofactor">
    <cofactor evidence="1">
        <name>Mg(2+)</name>
        <dbReference type="ChEBI" id="CHEBI:18420"/>
    </cofactor>
    <text evidence="1">Binds 1 Mg(2+) ion per subunit.</text>
</comment>
<comment type="pathway">
    <text evidence="1">Cofactor biosynthesis; (R)-pantothenate biosynthesis; (R)-pantoate from 3-methyl-2-oxobutanoate: step 1/2.</text>
</comment>
<comment type="subunit">
    <text evidence="1">Homodecamer; pentamer of dimers.</text>
</comment>
<comment type="subcellular location">
    <subcellularLocation>
        <location evidence="1">Cytoplasm</location>
    </subcellularLocation>
</comment>
<comment type="similarity">
    <text evidence="1">Belongs to the PanB family.</text>
</comment>
<comment type="sequence caution" evidence="2">
    <conflict type="erroneous initiation">
        <sequence resource="EMBL-CDS" id="AAG61077"/>
    </conflict>
    <text>Extended N-terminus.</text>
</comment>
<comment type="sequence caution" evidence="2">
    <conflict type="erroneous initiation">
        <sequence resource="EMBL-CDS" id="BAC47366"/>
    </conflict>
    <text>Extended N-terminus.</text>
</comment>
<accession>Q9AMS0</accession>
<protein>
    <recommendedName>
        <fullName evidence="1">3-methyl-2-oxobutanoate hydroxymethyltransferase 2</fullName>
        <ecNumber evidence="1">2.1.2.11</ecNumber>
    </recommendedName>
    <alternativeName>
        <fullName evidence="1">Ketopantoate hydroxymethyltransferase 2</fullName>
        <shortName evidence="1">KPHMT 2</shortName>
    </alternativeName>
</protein>
<evidence type="ECO:0000255" key="1">
    <source>
        <dbReference type="HAMAP-Rule" id="MF_00156"/>
    </source>
</evidence>
<evidence type="ECO:0000305" key="2"/>
<sequence>MSHSSEQPLERVTIPALQQWKDKGRRVVMTTAYDAVAARIADPIVDIILVGDSVGNVCLGFDNTLPVSVAMMNHHLEAVARTRPHALLVADMPFLSFHVGSEDTIRNAGGFLQRGADAVKLEGGAKRIEMVRALVDCDIPVMGHLGLTPQSVNVMGGFKVQGRTTDTALRLLDDAHRLQEAGCFALVLEGIPAELAARATESLTIPTIGIGAGADCSGQVLVFHDVLGLTEGHRPKFVRAYTNGFQLFQEALSRWAADIRKGAFPGSEECYRLPDQLRHAVANWVPSSSTSR</sequence>
<organism>
    <name type="scientific">Bradyrhizobium diazoefficiens (strain JCM 10833 / BCRC 13528 / IAM 13628 / NBRC 14792 / USDA 110)</name>
    <dbReference type="NCBI Taxonomy" id="224911"/>
    <lineage>
        <taxon>Bacteria</taxon>
        <taxon>Pseudomonadati</taxon>
        <taxon>Pseudomonadota</taxon>
        <taxon>Alphaproteobacteria</taxon>
        <taxon>Hyphomicrobiales</taxon>
        <taxon>Nitrobacteraceae</taxon>
        <taxon>Bradyrhizobium</taxon>
    </lineage>
</organism>
<feature type="chain" id="PRO_0000184824" description="3-methyl-2-oxobutanoate hydroxymethyltransferase 2">
    <location>
        <begin position="1"/>
        <end position="292"/>
    </location>
</feature>
<feature type="active site" description="Proton acceptor" evidence="1">
    <location>
        <position position="189"/>
    </location>
</feature>
<feature type="binding site" evidence="1">
    <location>
        <begin position="52"/>
        <end position="53"/>
    </location>
    <ligand>
        <name>3-methyl-2-oxobutanoate</name>
        <dbReference type="ChEBI" id="CHEBI:11851"/>
    </ligand>
</feature>
<feature type="binding site" evidence="1">
    <location>
        <position position="52"/>
    </location>
    <ligand>
        <name>Mg(2+)</name>
        <dbReference type="ChEBI" id="CHEBI:18420"/>
    </ligand>
</feature>
<feature type="binding site" evidence="1">
    <location>
        <position position="91"/>
    </location>
    <ligand>
        <name>3-methyl-2-oxobutanoate</name>
        <dbReference type="ChEBI" id="CHEBI:11851"/>
    </ligand>
</feature>
<feature type="binding site" evidence="1">
    <location>
        <position position="91"/>
    </location>
    <ligand>
        <name>Mg(2+)</name>
        <dbReference type="ChEBI" id="CHEBI:18420"/>
    </ligand>
</feature>
<feature type="binding site" evidence="1">
    <location>
        <position position="120"/>
    </location>
    <ligand>
        <name>3-methyl-2-oxobutanoate</name>
        <dbReference type="ChEBI" id="CHEBI:11851"/>
    </ligand>
</feature>
<feature type="binding site" evidence="1">
    <location>
        <position position="122"/>
    </location>
    <ligand>
        <name>Mg(2+)</name>
        <dbReference type="ChEBI" id="CHEBI:18420"/>
    </ligand>
</feature>
<reference key="1">
    <citation type="journal article" date="2001" name="J. Bacteriol.">
        <title>Potential symbiosis-specific genes uncovered by sequencing a 410-kb DNA region of the Bradyrhizobium japonicum chromosome.</title>
        <authorList>
            <person name="Goettfert M."/>
            <person name="Roethlisberger S."/>
            <person name="Kuendig C."/>
            <person name="Beck C."/>
            <person name="Marty R."/>
            <person name="Hennecke H."/>
        </authorList>
    </citation>
    <scope>NUCLEOTIDE SEQUENCE [GENOMIC DNA]</scope>
    <source>
        <strain>USDA 110spc4</strain>
    </source>
</reference>
<reference key="2">
    <citation type="journal article" date="2002" name="DNA Res.">
        <title>Complete genomic sequence of nitrogen-fixing symbiotic bacterium Bradyrhizobium japonicum USDA110.</title>
        <authorList>
            <person name="Kaneko T."/>
            <person name="Nakamura Y."/>
            <person name="Sato S."/>
            <person name="Minamisawa K."/>
            <person name="Uchiumi T."/>
            <person name="Sasamoto S."/>
            <person name="Watanabe A."/>
            <person name="Idesawa K."/>
            <person name="Iriguchi M."/>
            <person name="Kawashima K."/>
            <person name="Kohara M."/>
            <person name="Matsumoto M."/>
            <person name="Shimpo S."/>
            <person name="Tsuruoka H."/>
            <person name="Wada T."/>
            <person name="Yamada M."/>
            <person name="Tabata S."/>
        </authorList>
    </citation>
    <scope>NUCLEOTIDE SEQUENCE [LARGE SCALE GENOMIC DNA]</scope>
    <source>
        <strain>JCM 10833 / BCRC 13528 / IAM 13628 / NBRC 14792 / USDA 110</strain>
    </source>
</reference>
<gene>
    <name evidence="1" type="primary">panB2</name>
    <name type="ordered locus">blr2101</name>
    <name type="ORF">id910</name>
</gene>